<gene>
    <name evidence="1" type="primary">acpP</name>
    <name type="ordered locus">TGRD_601</name>
</gene>
<organism>
    <name type="scientific">Endomicrobium trichonymphae</name>
    <dbReference type="NCBI Taxonomy" id="1408204"/>
    <lineage>
        <taxon>Bacteria</taxon>
        <taxon>Pseudomonadati</taxon>
        <taxon>Elusimicrobiota</taxon>
        <taxon>Endomicrobiia</taxon>
        <taxon>Endomicrobiales</taxon>
        <taxon>Endomicrobiaceae</taxon>
        <taxon>Candidatus Endomicrobiellum</taxon>
    </lineage>
</organism>
<comment type="function">
    <text evidence="1">Carrier of the growing fatty acid chain in fatty acid biosynthesis.</text>
</comment>
<comment type="pathway">
    <text evidence="1">Lipid metabolism; fatty acid biosynthesis.</text>
</comment>
<comment type="subcellular location">
    <subcellularLocation>
        <location evidence="1">Cytoplasm</location>
    </subcellularLocation>
</comment>
<comment type="PTM">
    <text evidence="1">4'-phosphopantetheine is transferred from CoA to a specific serine of apo-ACP by AcpS. This modification is essential for activity because fatty acids are bound in thioester linkage to the sulfhydryl of the prosthetic group.</text>
</comment>
<comment type="similarity">
    <text evidence="1">Belongs to the acyl carrier protein (ACP) family.</text>
</comment>
<reference key="1">
    <citation type="journal article" date="2008" name="Proc. Natl. Acad. Sci. U.S.A.">
        <title>Complete genome of the uncultured termite group 1 bacteria in a single host protist cell.</title>
        <authorList>
            <person name="Hongoh Y."/>
            <person name="Sharma V.K."/>
            <person name="Prakash T."/>
            <person name="Noda S."/>
            <person name="Taylor T.D."/>
            <person name="Kudo T."/>
            <person name="Sakaki Y."/>
            <person name="Toyoda A."/>
            <person name="Hattori M."/>
            <person name="Ohkuma M."/>
        </authorList>
    </citation>
    <scope>NUCLEOTIDE SEQUENCE [LARGE SCALE GENOMIC DNA]</scope>
</reference>
<keyword id="KW-0963">Cytoplasm</keyword>
<keyword id="KW-0275">Fatty acid biosynthesis</keyword>
<keyword id="KW-0276">Fatty acid metabolism</keyword>
<keyword id="KW-0444">Lipid biosynthesis</keyword>
<keyword id="KW-0443">Lipid metabolism</keyword>
<keyword id="KW-0596">Phosphopantetheine</keyword>
<keyword id="KW-0597">Phosphoprotein</keyword>
<accession>B1H0Q2</accession>
<sequence>MADFEARVKEIIVEQLGVDPAEVVTGASFVNDLGADSLDTVELVMAFEEKFGIEIPDEEAEKIQTVGSAIDYVKTHVRK</sequence>
<dbReference type="EMBL" id="AP009510">
    <property type="protein sequence ID" value="BAG14084.1"/>
    <property type="molecule type" value="Genomic_DNA"/>
</dbReference>
<dbReference type="RefSeq" id="WP_015423608.1">
    <property type="nucleotide sequence ID" value="NC_020419.1"/>
</dbReference>
<dbReference type="SMR" id="B1H0Q2"/>
<dbReference type="STRING" id="471821.TGRD_601"/>
<dbReference type="KEGG" id="eti:RSTT_563"/>
<dbReference type="KEGG" id="rsd:TGRD_601"/>
<dbReference type="PATRIC" id="fig|471821.5.peg.990"/>
<dbReference type="HOGENOM" id="CLU_108696_5_1_0"/>
<dbReference type="OrthoDB" id="9804551at2"/>
<dbReference type="UniPathway" id="UPA00094"/>
<dbReference type="Proteomes" id="UP000001691">
    <property type="component" value="Chromosome"/>
</dbReference>
<dbReference type="GO" id="GO:0005829">
    <property type="term" value="C:cytosol"/>
    <property type="evidence" value="ECO:0007669"/>
    <property type="project" value="TreeGrafter"/>
</dbReference>
<dbReference type="GO" id="GO:0016020">
    <property type="term" value="C:membrane"/>
    <property type="evidence" value="ECO:0007669"/>
    <property type="project" value="GOC"/>
</dbReference>
<dbReference type="GO" id="GO:0000035">
    <property type="term" value="F:acyl binding"/>
    <property type="evidence" value="ECO:0007669"/>
    <property type="project" value="TreeGrafter"/>
</dbReference>
<dbReference type="GO" id="GO:0000036">
    <property type="term" value="F:acyl carrier activity"/>
    <property type="evidence" value="ECO:0007669"/>
    <property type="project" value="UniProtKB-UniRule"/>
</dbReference>
<dbReference type="GO" id="GO:0031177">
    <property type="term" value="F:phosphopantetheine binding"/>
    <property type="evidence" value="ECO:0007669"/>
    <property type="project" value="InterPro"/>
</dbReference>
<dbReference type="GO" id="GO:0009245">
    <property type="term" value="P:lipid A biosynthetic process"/>
    <property type="evidence" value="ECO:0007669"/>
    <property type="project" value="TreeGrafter"/>
</dbReference>
<dbReference type="FunFam" id="1.10.1200.10:FF:000001">
    <property type="entry name" value="Acyl carrier protein"/>
    <property type="match status" value="1"/>
</dbReference>
<dbReference type="Gene3D" id="1.10.1200.10">
    <property type="entry name" value="ACP-like"/>
    <property type="match status" value="1"/>
</dbReference>
<dbReference type="HAMAP" id="MF_01217">
    <property type="entry name" value="Acyl_carrier"/>
    <property type="match status" value="1"/>
</dbReference>
<dbReference type="InterPro" id="IPR003231">
    <property type="entry name" value="ACP"/>
</dbReference>
<dbReference type="InterPro" id="IPR036736">
    <property type="entry name" value="ACP-like_sf"/>
</dbReference>
<dbReference type="InterPro" id="IPR020806">
    <property type="entry name" value="PKS_PP-bd"/>
</dbReference>
<dbReference type="InterPro" id="IPR009081">
    <property type="entry name" value="PP-bd_ACP"/>
</dbReference>
<dbReference type="InterPro" id="IPR006162">
    <property type="entry name" value="Ppantetheine_attach_site"/>
</dbReference>
<dbReference type="NCBIfam" id="TIGR00517">
    <property type="entry name" value="acyl_carrier"/>
    <property type="match status" value="1"/>
</dbReference>
<dbReference type="NCBIfam" id="NF002148">
    <property type="entry name" value="PRK00982.1-2"/>
    <property type="match status" value="1"/>
</dbReference>
<dbReference type="NCBIfam" id="NF002149">
    <property type="entry name" value="PRK00982.1-3"/>
    <property type="match status" value="1"/>
</dbReference>
<dbReference type="NCBIfam" id="NF002150">
    <property type="entry name" value="PRK00982.1-4"/>
    <property type="match status" value="1"/>
</dbReference>
<dbReference type="NCBIfam" id="NF002151">
    <property type="entry name" value="PRK00982.1-5"/>
    <property type="match status" value="1"/>
</dbReference>
<dbReference type="PANTHER" id="PTHR20863">
    <property type="entry name" value="ACYL CARRIER PROTEIN"/>
    <property type="match status" value="1"/>
</dbReference>
<dbReference type="PANTHER" id="PTHR20863:SF76">
    <property type="entry name" value="CARRIER DOMAIN-CONTAINING PROTEIN"/>
    <property type="match status" value="1"/>
</dbReference>
<dbReference type="Pfam" id="PF00550">
    <property type="entry name" value="PP-binding"/>
    <property type="match status" value="1"/>
</dbReference>
<dbReference type="SMART" id="SM00823">
    <property type="entry name" value="PKS_PP"/>
    <property type="match status" value="1"/>
</dbReference>
<dbReference type="SUPFAM" id="SSF47336">
    <property type="entry name" value="ACP-like"/>
    <property type="match status" value="1"/>
</dbReference>
<dbReference type="PROSITE" id="PS50075">
    <property type="entry name" value="CARRIER"/>
    <property type="match status" value="1"/>
</dbReference>
<dbReference type="PROSITE" id="PS00012">
    <property type="entry name" value="PHOSPHOPANTETHEINE"/>
    <property type="match status" value="1"/>
</dbReference>
<name>ACP_ENDTX</name>
<feature type="chain" id="PRO_1000139073" description="Acyl carrier protein">
    <location>
        <begin position="1"/>
        <end position="79"/>
    </location>
</feature>
<feature type="domain" description="Carrier" evidence="2">
    <location>
        <begin position="2"/>
        <end position="77"/>
    </location>
</feature>
<feature type="modified residue" description="O-(pantetheine 4'-phosphoryl)serine" evidence="2">
    <location>
        <position position="37"/>
    </location>
</feature>
<proteinExistence type="inferred from homology"/>
<evidence type="ECO:0000255" key="1">
    <source>
        <dbReference type="HAMAP-Rule" id="MF_01217"/>
    </source>
</evidence>
<evidence type="ECO:0000255" key="2">
    <source>
        <dbReference type="PROSITE-ProRule" id="PRU00258"/>
    </source>
</evidence>
<protein>
    <recommendedName>
        <fullName evidence="1">Acyl carrier protein</fullName>
        <shortName evidence="1">ACP</shortName>
    </recommendedName>
</protein>